<reference key="1">
    <citation type="journal article" date="2000" name="Nature">
        <title>Ancestral chloroplast genome in Mesostigma viride reveals an early branch of green plant evolution.</title>
        <authorList>
            <person name="Lemieux C."/>
            <person name="Otis C."/>
            <person name="Turmel M."/>
        </authorList>
    </citation>
    <scope>NUCLEOTIDE SEQUENCE [LARGE SCALE GENOMIC DNA]</scope>
    <source>
        <strain>NIES-296 / KY-14 / CCMP 2046</strain>
    </source>
</reference>
<feature type="chain" id="PRO_0000134302" description="Small ribosomal subunit protein uS2c">
    <location>
        <begin position="1"/>
        <end position="228"/>
    </location>
</feature>
<dbReference type="EMBL" id="AF166114">
    <property type="protein sequence ID" value="AAF43823.1"/>
    <property type="molecule type" value="Genomic_DNA"/>
</dbReference>
<dbReference type="RefSeq" id="NP_038382.1">
    <property type="nucleotide sequence ID" value="NC_002186.1"/>
</dbReference>
<dbReference type="SMR" id="Q9MUS8"/>
<dbReference type="GeneID" id="800877"/>
<dbReference type="GO" id="GO:0009507">
    <property type="term" value="C:chloroplast"/>
    <property type="evidence" value="ECO:0007669"/>
    <property type="project" value="UniProtKB-SubCell"/>
</dbReference>
<dbReference type="GO" id="GO:0005763">
    <property type="term" value="C:mitochondrial small ribosomal subunit"/>
    <property type="evidence" value="ECO:0007669"/>
    <property type="project" value="TreeGrafter"/>
</dbReference>
<dbReference type="GO" id="GO:0003735">
    <property type="term" value="F:structural constituent of ribosome"/>
    <property type="evidence" value="ECO:0007669"/>
    <property type="project" value="InterPro"/>
</dbReference>
<dbReference type="GO" id="GO:0006412">
    <property type="term" value="P:translation"/>
    <property type="evidence" value="ECO:0007669"/>
    <property type="project" value="UniProtKB-UniRule"/>
</dbReference>
<dbReference type="CDD" id="cd01425">
    <property type="entry name" value="RPS2"/>
    <property type="match status" value="1"/>
</dbReference>
<dbReference type="FunFam" id="1.10.287.610:FF:000001">
    <property type="entry name" value="30S ribosomal protein S2"/>
    <property type="match status" value="1"/>
</dbReference>
<dbReference type="Gene3D" id="3.40.50.10490">
    <property type="entry name" value="Glucose-6-phosphate isomerase like protein, domain 1"/>
    <property type="match status" value="1"/>
</dbReference>
<dbReference type="Gene3D" id="1.10.287.610">
    <property type="entry name" value="Helix hairpin bin"/>
    <property type="match status" value="1"/>
</dbReference>
<dbReference type="HAMAP" id="MF_00291_B">
    <property type="entry name" value="Ribosomal_uS2_B"/>
    <property type="match status" value="1"/>
</dbReference>
<dbReference type="InterPro" id="IPR001865">
    <property type="entry name" value="Ribosomal_uS2"/>
</dbReference>
<dbReference type="InterPro" id="IPR005706">
    <property type="entry name" value="Ribosomal_uS2_bac/mit/plastid"/>
</dbReference>
<dbReference type="InterPro" id="IPR018130">
    <property type="entry name" value="Ribosomal_uS2_CS"/>
</dbReference>
<dbReference type="InterPro" id="IPR023591">
    <property type="entry name" value="Ribosomal_uS2_flav_dom_sf"/>
</dbReference>
<dbReference type="NCBIfam" id="TIGR01011">
    <property type="entry name" value="rpsB_bact"/>
    <property type="match status" value="1"/>
</dbReference>
<dbReference type="PANTHER" id="PTHR12534">
    <property type="entry name" value="30S RIBOSOMAL PROTEIN S2 PROKARYOTIC AND ORGANELLAR"/>
    <property type="match status" value="1"/>
</dbReference>
<dbReference type="PANTHER" id="PTHR12534:SF0">
    <property type="entry name" value="SMALL RIBOSOMAL SUBUNIT PROTEIN US2M"/>
    <property type="match status" value="1"/>
</dbReference>
<dbReference type="Pfam" id="PF00318">
    <property type="entry name" value="Ribosomal_S2"/>
    <property type="match status" value="1"/>
</dbReference>
<dbReference type="PRINTS" id="PR00395">
    <property type="entry name" value="RIBOSOMALS2"/>
</dbReference>
<dbReference type="SUPFAM" id="SSF52313">
    <property type="entry name" value="Ribosomal protein S2"/>
    <property type="match status" value="1"/>
</dbReference>
<dbReference type="PROSITE" id="PS00962">
    <property type="entry name" value="RIBOSOMAL_S2_1"/>
    <property type="match status" value="1"/>
</dbReference>
<dbReference type="PROSITE" id="PS00963">
    <property type="entry name" value="RIBOSOMAL_S2_2"/>
    <property type="match status" value="1"/>
</dbReference>
<proteinExistence type="inferred from homology"/>
<name>RR2_MESVI</name>
<organism>
    <name type="scientific">Mesostigma viride</name>
    <name type="common">Green alga</name>
    <dbReference type="NCBI Taxonomy" id="41882"/>
    <lineage>
        <taxon>Eukaryota</taxon>
        <taxon>Viridiplantae</taxon>
        <taxon>Streptophyta</taxon>
        <taxon>Mesostigmatophyceae</taxon>
        <taxon>Mesostigmatales</taxon>
        <taxon>Mesostigmataceae</taxon>
        <taxon>Mesostigma</taxon>
    </lineage>
</organism>
<keyword id="KW-0150">Chloroplast</keyword>
<keyword id="KW-0934">Plastid</keyword>
<keyword id="KW-0687">Ribonucleoprotein</keyword>
<keyword id="KW-0689">Ribosomal protein</keyword>
<protein>
    <recommendedName>
        <fullName evidence="1">Small ribosomal subunit protein uS2c</fullName>
    </recommendedName>
    <alternativeName>
        <fullName>30S ribosomal protein S2, chloroplastic</fullName>
    </alternativeName>
</protein>
<gene>
    <name type="primary">rps2</name>
</gene>
<geneLocation type="chloroplast"/>
<evidence type="ECO:0000305" key="1"/>
<sequence length="228" mass="25704">MKSVGLEEMMEAGVHFGHQTRGWNPKMSSYIYGNRNGIHLIDLVQTARLLSEACDFLFNAAKEGKEFLFVGTKSQASDIIASEALRAESHYVNQRWLGGMLTNWSTIKTRIRKLKDLEQKEKNGILDTLPKKEAAVLKRQLYKLRKYLSGLQDMKYLPDVVIIVDQKREINAVKECIKLGIPTISLVDTNCDPTLADLPIPANDDAIRSINLLVSKLADAIYEGQRVK</sequence>
<comment type="subcellular location">
    <subcellularLocation>
        <location>Plastid</location>
        <location>Chloroplast</location>
    </subcellularLocation>
</comment>
<comment type="similarity">
    <text evidence="1">Belongs to the universal ribosomal protein uS2 family.</text>
</comment>
<accession>Q9MUS8</accession>